<proteinExistence type="inferred from homology"/>
<sequence>MSYVIDRRLNGKNKSTVNRQRFLRRYREHIKKAVEEAVSRRSIMDMEHGEQISIPGRDIDEPVLHHGRGGKQTIVHPGNKEFTAGEHIPRPQGGGGGGGGRGKAGNSGEGMDEFVFQITQEEFLEFMFEDLELPNLVKRHLTGADTFKTVRAGIANEGNPSRINIVRTLRSAHARRIALTGSSRALLREAQKELDRLRVEEPDNFTDIQEVEQEIERLKARINRLPFLDTFDLKYNLLVKQPNPSSKAVMFCLMDVSGSMTQATKDIAKRFFILLYLFLKRNYDRIEVVFIRHHTSAREVDEEEFFYSRETGGTIVSSALKLMQEIMAERYPASDWNIYAAQASDGDNWNDDSPICRDILSKQIMPHVQYYTYVEITPREHQALWYEYERIGEAYPDTFAQQQLVSAGDIYPVFRELFQRRLAT</sequence>
<name>Y427_PSEPG</name>
<comment type="similarity">
    <text evidence="1">Belongs to the UPF0229 family.</text>
</comment>
<evidence type="ECO:0000255" key="1">
    <source>
        <dbReference type="HAMAP-Rule" id="MF_01232"/>
    </source>
</evidence>
<evidence type="ECO:0000256" key="2">
    <source>
        <dbReference type="SAM" id="MobiDB-lite"/>
    </source>
</evidence>
<dbReference type="EMBL" id="CP000926">
    <property type="protein sequence ID" value="ABY96338.1"/>
    <property type="molecule type" value="Genomic_DNA"/>
</dbReference>
<dbReference type="RefSeq" id="WP_012270194.1">
    <property type="nucleotide sequence ID" value="NC_010322.1"/>
</dbReference>
<dbReference type="SMR" id="B0KJ88"/>
<dbReference type="KEGG" id="ppg:PputGB1_0427"/>
<dbReference type="eggNOG" id="COG2718">
    <property type="taxonomic scope" value="Bacteria"/>
</dbReference>
<dbReference type="HOGENOM" id="CLU_049702_0_0_6"/>
<dbReference type="Proteomes" id="UP000002157">
    <property type="component" value="Chromosome"/>
</dbReference>
<dbReference type="HAMAP" id="MF_01232">
    <property type="entry name" value="UPF0229"/>
    <property type="match status" value="1"/>
</dbReference>
<dbReference type="InterPro" id="IPR006698">
    <property type="entry name" value="UPF0229"/>
</dbReference>
<dbReference type="InterPro" id="IPR036465">
    <property type="entry name" value="vWFA_dom_sf"/>
</dbReference>
<dbReference type="NCBIfam" id="NF003707">
    <property type="entry name" value="PRK05325.1-2"/>
    <property type="match status" value="1"/>
</dbReference>
<dbReference type="NCBIfam" id="NF003708">
    <property type="entry name" value="PRK05325.1-3"/>
    <property type="match status" value="1"/>
</dbReference>
<dbReference type="PANTHER" id="PTHR30510">
    <property type="entry name" value="UPF0229 PROTEIN YEAH"/>
    <property type="match status" value="1"/>
</dbReference>
<dbReference type="PANTHER" id="PTHR30510:SF2">
    <property type="entry name" value="UPF0229 PROTEIN YEAH"/>
    <property type="match status" value="1"/>
</dbReference>
<dbReference type="Pfam" id="PF04285">
    <property type="entry name" value="DUF444"/>
    <property type="match status" value="1"/>
</dbReference>
<dbReference type="SUPFAM" id="SSF53300">
    <property type="entry name" value="vWA-like"/>
    <property type="match status" value="1"/>
</dbReference>
<protein>
    <recommendedName>
        <fullName evidence="1">UPF0229 protein PputGB1_0427</fullName>
    </recommendedName>
</protein>
<reference key="1">
    <citation type="submission" date="2008-01" db="EMBL/GenBank/DDBJ databases">
        <title>Complete sequence of Pseudomonas putida GB-1.</title>
        <authorList>
            <consortium name="US DOE Joint Genome Institute"/>
            <person name="Copeland A."/>
            <person name="Lucas S."/>
            <person name="Lapidus A."/>
            <person name="Barry K."/>
            <person name="Glavina del Rio T."/>
            <person name="Dalin E."/>
            <person name="Tice H."/>
            <person name="Pitluck S."/>
            <person name="Bruce D."/>
            <person name="Goodwin L."/>
            <person name="Chertkov O."/>
            <person name="Brettin T."/>
            <person name="Detter J.C."/>
            <person name="Han C."/>
            <person name="Kuske C.R."/>
            <person name="Schmutz J."/>
            <person name="Larimer F."/>
            <person name="Land M."/>
            <person name="Hauser L."/>
            <person name="Kyrpides N."/>
            <person name="Kim E."/>
            <person name="McCarthy J.K."/>
            <person name="Richardson P."/>
        </authorList>
    </citation>
    <scope>NUCLEOTIDE SEQUENCE [LARGE SCALE GENOMIC DNA]</scope>
    <source>
        <strain>GB-1</strain>
    </source>
</reference>
<gene>
    <name type="ordered locus">PputGB1_0427</name>
</gene>
<organism>
    <name type="scientific">Pseudomonas putida (strain GB-1)</name>
    <dbReference type="NCBI Taxonomy" id="76869"/>
    <lineage>
        <taxon>Bacteria</taxon>
        <taxon>Pseudomonadati</taxon>
        <taxon>Pseudomonadota</taxon>
        <taxon>Gammaproteobacteria</taxon>
        <taxon>Pseudomonadales</taxon>
        <taxon>Pseudomonadaceae</taxon>
        <taxon>Pseudomonas</taxon>
    </lineage>
</organism>
<feature type="chain" id="PRO_1000085719" description="UPF0229 protein PputGB1_0427">
    <location>
        <begin position="1"/>
        <end position="424"/>
    </location>
</feature>
<feature type="region of interest" description="Disordered" evidence="2">
    <location>
        <begin position="81"/>
        <end position="107"/>
    </location>
</feature>
<feature type="compositionally biased region" description="Gly residues" evidence="2">
    <location>
        <begin position="92"/>
        <end position="107"/>
    </location>
</feature>
<accession>B0KJ88</accession>